<comment type="function">
    <text evidence="1">Reversibly transfers an adenylyl group from ATP to 4'-phosphopantetheine, yielding dephospho-CoA (dPCoA) and pyrophosphate.</text>
</comment>
<comment type="catalytic activity">
    <reaction evidence="1">
        <text>(R)-4'-phosphopantetheine + ATP + H(+) = 3'-dephospho-CoA + diphosphate</text>
        <dbReference type="Rhea" id="RHEA:19801"/>
        <dbReference type="ChEBI" id="CHEBI:15378"/>
        <dbReference type="ChEBI" id="CHEBI:30616"/>
        <dbReference type="ChEBI" id="CHEBI:33019"/>
        <dbReference type="ChEBI" id="CHEBI:57328"/>
        <dbReference type="ChEBI" id="CHEBI:61723"/>
        <dbReference type="EC" id="2.7.7.3"/>
    </reaction>
</comment>
<comment type="cofactor">
    <cofactor evidence="1">
        <name>Mg(2+)</name>
        <dbReference type="ChEBI" id="CHEBI:18420"/>
    </cofactor>
</comment>
<comment type="pathway">
    <text evidence="1">Cofactor biosynthesis; coenzyme A biosynthesis; CoA from (R)-pantothenate: step 4/5.</text>
</comment>
<comment type="subunit">
    <text evidence="1">Homohexamer.</text>
</comment>
<comment type="subcellular location">
    <subcellularLocation>
        <location evidence="1">Cytoplasm</location>
    </subcellularLocation>
</comment>
<comment type="similarity">
    <text evidence="1">Belongs to the bacterial CoaD family.</text>
</comment>
<organism>
    <name type="scientific">Wolbachia pipientis wMel</name>
    <dbReference type="NCBI Taxonomy" id="163164"/>
    <lineage>
        <taxon>Bacteria</taxon>
        <taxon>Pseudomonadati</taxon>
        <taxon>Pseudomonadota</taxon>
        <taxon>Alphaproteobacteria</taxon>
        <taxon>Rickettsiales</taxon>
        <taxon>Anaplasmataceae</taxon>
        <taxon>Wolbachieae</taxon>
        <taxon>Wolbachia</taxon>
    </lineage>
</organism>
<dbReference type="EC" id="2.7.7.3" evidence="1"/>
<dbReference type="EMBL" id="AE017196">
    <property type="protein sequence ID" value="AAS14236.1"/>
    <property type="molecule type" value="Genomic_DNA"/>
</dbReference>
<dbReference type="RefSeq" id="WP_006279325.1">
    <property type="nucleotide sequence ID" value="NZ_OX384529.1"/>
</dbReference>
<dbReference type="SMR" id="Q73HM7"/>
<dbReference type="EnsemblBacteria" id="AAS14236">
    <property type="protein sequence ID" value="AAS14236"/>
    <property type="gene ID" value="WD_0524"/>
</dbReference>
<dbReference type="GeneID" id="70036009"/>
<dbReference type="KEGG" id="wol:WD_0524"/>
<dbReference type="eggNOG" id="COG0669">
    <property type="taxonomic scope" value="Bacteria"/>
</dbReference>
<dbReference type="UniPathway" id="UPA00241">
    <property type="reaction ID" value="UER00355"/>
</dbReference>
<dbReference type="Proteomes" id="UP000008215">
    <property type="component" value="Chromosome"/>
</dbReference>
<dbReference type="GO" id="GO:0005737">
    <property type="term" value="C:cytoplasm"/>
    <property type="evidence" value="ECO:0007669"/>
    <property type="project" value="UniProtKB-SubCell"/>
</dbReference>
<dbReference type="GO" id="GO:0005524">
    <property type="term" value="F:ATP binding"/>
    <property type="evidence" value="ECO:0007669"/>
    <property type="project" value="UniProtKB-KW"/>
</dbReference>
<dbReference type="GO" id="GO:0004595">
    <property type="term" value="F:pantetheine-phosphate adenylyltransferase activity"/>
    <property type="evidence" value="ECO:0007669"/>
    <property type="project" value="UniProtKB-UniRule"/>
</dbReference>
<dbReference type="GO" id="GO:0015937">
    <property type="term" value="P:coenzyme A biosynthetic process"/>
    <property type="evidence" value="ECO:0007669"/>
    <property type="project" value="UniProtKB-UniRule"/>
</dbReference>
<dbReference type="CDD" id="cd02163">
    <property type="entry name" value="PPAT"/>
    <property type="match status" value="1"/>
</dbReference>
<dbReference type="Gene3D" id="3.40.50.620">
    <property type="entry name" value="HUPs"/>
    <property type="match status" value="1"/>
</dbReference>
<dbReference type="HAMAP" id="MF_00151">
    <property type="entry name" value="PPAT_bact"/>
    <property type="match status" value="1"/>
</dbReference>
<dbReference type="InterPro" id="IPR004821">
    <property type="entry name" value="Cyt_trans-like"/>
</dbReference>
<dbReference type="InterPro" id="IPR001980">
    <property type="entry name" value="PPAT"/>
</dbReference>
<dbReference type="InterPro" id="IPR014729">
    <property type="entry name" value="Rossmann-like_a/b/a_fold"/>
</dbReference>
<dbReference type="NCBIfam" id="TIGR01510">
    <property type="entry name" value="coaD_prev_kdtB"/>
    <property type="match status" value="1"/>
</dbReference>
<dbReference type="NCBIfam" id="TIGR00125">
    <property type="entry name" value="cyt_tran_rel"/>
    <property type="match status" value="1"/>
</dbReference>
<dbReference type="PANTHER" id="PTHR21342">
    <property type="entry name" value="PHOSPHOPANTETHEINE ADENYLYLTRANSFERASE"/>
    <property type="match status" value="1"/>
</dbReference>
<dbReference type="PANTHER" id="PTHR21342:SF1">
    <property type="entry name" value="PHOSPHOPANTETHEINE ADENYLYLTRANSFERASE"/>
    <property type="match status" value="1"/>
</dbReference>
<dbReference type="Pfam" id="PF01467">
    <property type="entry name" value="CTP_transf_like"/>
    <property type="match status" value="1"/>
</dbReference>
<dbReference type="PRINTS" id="PR01020">
    <property type="entry name" value="LPSBIOSNTHSS"/>
</dbReference>
<dbReference type="SUPFAM" id="SSF52374">
    <property type="entry name" value="Nucleotidylyl transferase"/>
    <property type="match status" value="1"/>
</dbReference>
<name>COAD_WOLPM</name>
<gene>
    <name evidence="1" type="primary">coaD</name>
    <name type="ordered locus">WD_0524</name>
</gene>
<protein>
    <recommendedName>
        <fullName evidence="1">Phosphopantetheine adenylyltransferase</fullName>
        <ecNumber evidence="1">2.7.7.3</ecNumber>
    </recommendedName>
    <alternativeName>
        <fullName evidence="1">Dephospho-CoA pyrophosphorylase</fullName>
    </alternativeName>
    <alternativeName>
        <fullName evidence="1">Pantetheine-phosphate adenylyltransferase</fullName>
        <shortName evidence="1">PPAT</shortName>
    </alternativeName>
</protein>
<keyword id="KW-0067">ATP-binding</keyword>
<keyword id="KW-0173">Coenzyme A biosynthesis</keyword>
<keyword id="KW-0963">Cytoplasm</keyword>
<keyword id="KW-0460">Magnesium</keyword>
<keyword id="KW-0547">Nucleotide-binding</keyword>
<keyword id="KW-0548">Nucleotidyltransferase</keyword>
<keyword id="KW-0808">Transferase</keyword>
<proteinExistence type="inferred from homology"/>
<sequence length="168" mass="18829">MNINDKIGIYPGTFDPITFGHLDIIKRACKLVDKLIIGVAENVNKHTAFDTKLRTSMAENEIKGLGIDADVISFNGLLVKFAKEQNASVIIRGLRAVSDFDYEFQMSWVNYKLLPEIETIFLPASEDTQFISSSFVKEIARLGEDVSKFVSKGVQNELINLNRIKNGE</sequence>
<reference key="1">
    <citation type="journal article" date="2004" name="PLoS Biol.">
        <title>Phylogenomics of the reproductive parasite Wolbachia pipientis wMel: a streamlined genome overrun by mobile genetic elements.</title>
        <authorList>
            <person name="Wu M."/>
            <person name="Sun L.V."/>
            <person name="Vamathevan J.J."/>
            <person name="Riegler M."/>
            <person name="DeBoy R.T."/>
            <person name="Brownlie J.C."/>
            <person name="McGraw E.A."/>
            <person name="Martin W."/>
            <person name="Esser C."/>
            <person name="Ahmadinejad N."/>
            <person name="Wiegand C."/>
            <person name="Madupu R."/>
            <person name="Beanan M.J."/>
            <person name="Brinkac L.M."/>
            <person name="Daugherty S.C."/>
            <person name="Durkin A.S."/>
            <person name="Kolonay J.F."/>
            <person name="Nelson W.C."/>
            <person name="Mohamoud Y."/>
            <person name="Lee P."/>
            <person name="Berry K.J."/>
            <person name="Young M.B."/>
            <person name="Utterback T.R."/>
            <person name="Weidman J.F."/>
            <person name="Nierman W.C."/>
            <person name="Paulsen I.T."/>
            <person name="Nelson K.E."/>
            <person name="Tettelin H."/>
            <person name="O'Neill S.L."/>
            <person name="Eisen J.A."/>
        </authorList>
    </citation>
    <scope>NUCLEOTIDE SEQUENCE [LARGE SCALE GENOMIC DNA]</scope>
</reference>
<accession>Q73HM7</accession>
<evidence type="ECO:0000255" key="1">
    <source>
        <dbReference type="HAMAP-Rule" id="MF_00151"/>
    </source>
</evidence>
<feature type="chain" id="PRO_0000156309" description="Phosphopantetheine adenylyltransferase">
    <location>
        <begin position="1"/>
        <end position="168"/>
    </location>
</feature>
<feature type="binding site" evidence="1">
    <location>
        <begin position="13"/>
        <end position="14"/>
    </location>
    <ligand>
        <name>ATP</name>
        <dbReference type="ChEBI" id="CHEBI:30616"/>
    </ligand>
</feature>
<feature type="binding site" evidence="1">
    <location>
        <position position="13"/>
    </location>
    <ligand>
        <name>substrate</name>
    </ligand>
</feature>
<feature type="binding site" evidence="1">
    <location>
        <position position="21"/>
    </location>
    <ligand>
        <name>ATP</name>
        <dbReference type="ChEBI" id="CHEBI:30616"/>
    </ligand>
</feature>
<feature type="binding site" evidence="1">
    <location>
        <position position="45"/>
    </location>
    <ligand>
        <name>substrate</name>
    </ligand>
</feature>
<feature type="binding site" evidence="1">
    <location>
        <position position="78"/>
    </location>
    <ligand>
        <name>substrate</name>
    </ligand>
</feature>
<feature type="binding site" evidence="1">
    <location>
        <position position="92"/>
    </location>
    <ligand>
        <name>substrate</name>
    </ligand>
</feature>
<feature type="binding site" evidence="1">
    <location>
        <begin position="93"/>
        <end position="95"/>
    </location>
    <ligand>
        <name>ATP</name>
        <dbReference type="ChEBI" id="CHEBI:30616"/>
    </ligand>
</feature>
<feature type="binding site" evidence="1">
    <location>
        <position position="103"/>
    </location>
    <ligand>
        <name>ATP</name>
        <dbReference type="ChEBI" id="CHEBI:30616"/>
    </ligand>
</feature>
<feature type="binding site" evidence="1">
    <location>
        <begin position="128"/>
        <end position="134"/>
    </location>
    <ligand>
        <name>ATP</name>
        <dbReference type="ChEBI" id="CHEBI:30616"/>
    </ligand>
</feature>
<feature type="site" description="Transition state stabilizer" evidence="1">
    <location>
        <position position="21"/>
    </location>
</feature>